<name>NCAP_CVHN2</name>
<accession>Q14EA6</accession>
<organismHost>
    <name type="scientific">Homo sapiens</name>
    <name type="common">Human</name>
    <dbReference type="NCBI Taxonomy" id="9606"/>
</organismHost>
<proteinExistence type="inferred from homology"/>
<reference key="1">
    <citation type="journal article" date="2006" name="J. Virol.">
        <title>Comparative analysis of 22 coronavirus HKU1 genomes reveals a novel genotype and evidence of natural recombination in coronavirus HKU1.</title>
        <authorList>
            <person name="Woo P.C.Y."/>
            <person name="Lau S.K.P."/>
            <person name="Yip C.C.Y."/>
            <person name="Huang Y."/>
            <person name="Tsoi H.-W."/>
            <person name="Chan K.-H."/>
            <person name="Yuen K.-Y."/>
        </authorList>
    </citation>
    <scope>NUCLEOTIDE SEQUENCE [GENOMIC RNA]</scope>
</reference>
<evidence type="ECO:0000250" key="1">
    <source>
        <dbReference type="UniProtKB" id="P0DTC9"/>
    </source>
</evidence>
<evidence type="ECO:0000255" key="2">
    <source>
        <dbReference type="HAMAP-Rule" id="MF_04096"/>
    </source>
</evidence>
<evidence type="ECO:0000255" key="3">
    <source>
        <dbReference type="PROSITE-ProRule" id="PRU01276"/>
    </source>
</evidence>
<evidence type="ECO:0000255" key="4">
    <source>
        <dbReference type="PROSITE-ProRule" id="PRU01277"/>
    </source>
</evidence>
<evidence type="ECO:0000256" key="5">
    <source>
        <dbReference type="SAM" id="MobiDB-lite"/>
    </source>
</evidence>
<gene>
    <name evidence="2" type="primary">N</name>
    <name type="ORF">7a</name>
</gene>
<organism>
    <name type="scientific">Human coronavirus HKU1 (isolate N2)</name>
    <name type="common">HCoV-HKU1</name>
    <dbReference type="NCBI Taxonomy" id="443240"/>
    <lineage>
        <taxon>Viruses</taxon>
        <taxon>Riboviria</taxon>
        <taxon>Orthornavirae</taxon>
        <taxon>Pisuviricota</taxon>
        <taxon>Pisoniviricetes</taxon>
        <taxon>Nidovirales</taxon>
        <taxon>Cornidovirineae</taxon>
        <taxon>Coronaviridae</taxon>
        <taxon>Orthocoronavirinae</taxon>
        <taxon>Betacoronavirus</taxon>
        <taxon>Embecovirus</taxon>
        <taxon>Human coronavirus HKU1</taxon>
    </lineage>
</organism>
<protein>
    <recommendedName>
        <fullName evidence="2">Nucleoprotein</fullName>
    </recommendedName>
    <alternativeName>
        <fullName evidence="2">Nucleocapsid protein</fullName>
        <shortName evidence="2">NC</shortName>
        <shortName evidence="2">Protein N</shortName>
    </alternativeName>
</protein>
<feature type="chain" id="PRO_0000297768" description="Nucleoprotein">
    <location>
        <begin position="1"/>
        <end position="441"/>
    </location>
</feature>
<feature type="domain" description="CoV N NTD" evidence="3">
    <location>
        <begin position="60"/>
        <end position="189"/>
    </location>
</feature>
<feature type="domain" description="CoV N CTD" evidence="4">
    <location>
        <begin position="257"/>
        <end position="379"/>
    </location>
</feature>
<feature type="region of interest" description="Disordered" evidence="5">
    <location>
        <begin position="1"/>
        <end position="56"/>
    </location>
</feature>
<feature type="region of interest" description="RNA-binding" evidence="2">
    <location>
        <begin position="53"/>
        <end position="193"/>
    </location>
</feature>
<feature type="region of interest" description="Disordered" evidence="5">
    <location>
        <begin position="186"/>
        <end position="226"/>
    </location>
</feature>
<feature type="region of interest" description="Dimerization" evidence="2">
    <location>
        <begin position="264"/>
        <end position="382"/>
    </location>
</feature>
<feature type="region of interest" description="Disordered" evidence="5">
    <location>
        <begin position="380"/>
        <end position="408"/>
    </location>
</feature>
<feature type="compositionally biased region" description="Low complexity" evidence="5">
    <location>
        <begin position="11"/>
        <end position="20"/>
    </location>
</feature>
<feature type="compositionally biased region" description="Low complexity" evidence="5">
    <location>
        <begin position="189"/>
        <end position="220"/>
    </location>
</feature>
<feature type="compositionally biased region" description="Polar residues" evidence="5">
    <location>
        <begin position="380"/>
        <end position="389"/>
    </location>
</feature>
<feature type="binding site" evidence="1">
    <location>
        <position position="105"/>
    </location>
    <ligand>
        <name>RNA</name>
        <dbReference type="ChEBI" id="CHEBI:33697"/>
    </ligand>
</feature>
<feature type="binding site" evidence="1">
    <location>
        <position position="121"/>
    </location>
    <ligand>
        <name>RNA</name>
        <dbReference type="ChEBI" id="CHEBI:33697"/>
    </ligand>
</feature>
<feature type="binding site" evidence="1">
    <location>
        <position position="163"/>
    </location>
    <ligand>
        <name>RNA</name>
        <dbReference type="ChEBI" id="CHEBI:33697"/>
    </ligand>
</feature>
<feature type="modified residue" description="Phosphoserine; by host" evidence="2">
    <location>
        <position position="158"/>
    </location>
</feature>
<feature type="modified residue" description="Phosphothreonine; by host" evidence="2">
    <location>
        <position position="173"/>
    </location>
</feature>
<feature type="modified residue" description="Phosphoserine; by host" evidence="2">
    <location>
        <position position="190"/>
    </location>
</feature>
<feature type="modified residue" description="Phosphoserine; by host" evidence="2">
    <location>
        <position position="388"/>
    </location>
</feature>
<feature type="modified residue" description="Phosphoserine; by host" evidence="2">
    <location>
        <position position="417"/>
    </location>
</feature>
<feature type="modified residue" description="Phosphothreonine; by host" evidence="2">
    <location>
        <position position="421"/>
    </location>
</feature>
<sequence>MSYTPGHHAGSRSSSGNRSGILKKTSWVDQSERSHQTYNRGRKPQPKFTVSTQPQGNPIPHYSWFSGITQFQKGRDFKFPDGQGVPIAYGIPPSEAKGYWYKHNRRSFKTADGQQKQLLPRWYFYYLGTGPYASSSYGDAHEGIFWVASHQADTSIPSDVSARDPTIQEAIPTRFSPGTILPQGYYVEGSGRSASNSRPGSRSQSRGPNNRSLSRSNSNFRHSDSIVKPDMADEIASLVLAKLGKDSKPQQVTKQNAKEIRHKILMKPRQKRTPNKFCNVQQCFGKRGPLQNFGNSEMLKLGTNDPQFPILAELAPTPGAFFFGSKLELFKRDSDADSPSKDTFELRYSGSIRFDSTLPGFETIMKVLKENLDAYVNSNQNTVSGSLSPKPQRKRGVKQSPESFDSLNLSADTQHISNDFTPEDHSLLATLDDPYVEDSVA</sequence>
<comment type="function">
    <text evidence="2">Packages the positive strand viral genome RNA into a helical ribonucleocapsid (RNP) and plays a fundamental role during virion assembly through its interactions with the viral genome and membrane protein M. Plays an important role in enhancing the efficiency of subgenomic viral RNA transcription as well as viral replication.</text>
</comment>
<comment type="subunit">
    <text evidence="2">Homooligomer. Both monomeric and oligomeric forms interact with RNA. Interacts with protein M. Interacts with NSP3; this interaction serves to tether the genome to the newly translated replicase-transcriptase complex at a very early stage of infection.</text>
</comment>
<comment type="subcellular location">
    <subcellularLocation>
        <location evidence="2">Virion</location>
    </subcellularLocation>
    <subcellularLocation>
        <location evidence="2">Host endoplasmic reticulum-Golgi intermediate compartment</location>
    </subcellularLocation>
    <subcellularLocation>
        <location evidence="2">Host Golgi apparatus</location>
    </subcellularLocation>
    <text evidence="2">Located inside the virion, complexed with the viral RNA. Probably associates with ER-derived membranes where it participates in viral RNA synthesis and virus budding.</text>
</comment>
<comment type="PTM">
    <text evidence="2">ADP-ribosylated. The ADP-ribosylation is retained in the virion during infection.</text>
</comment>
<comment type="PTM">
    <text evidence="2">Phosphorylated on serine and threonine residues.</text>
</comment>
<comment type="similarity">
    <text evidence="2">Belongs to the betacoronavirus nucleocapsid protein family.</text>
</comment>
<dbReference type="EMBL" id="AY884001">
    <property type="protein sequence ID" value="AAX76525.1"/>
    <property type="molecule type" value="Genomic_RNA"/>
</dbReference>
<dbReference type="SMR" id="Q14EA6"/>
<dbReference type="Proteomes" id="UP000006551">
    <property type="component" value="Genome"/>
</dbReference>
<dbReference type="GO" id="GO:0044172">
    <property type="term" value="C:host cell endoplasmic reticulum-Golgi intermediate compartment"/>
    <property type="evidence" value="ECO:0007669"/>
    <property type="project" value="UniProtKB-SubCell"/>
</dbReference>
<dbReference type="GO" id="GO:0044177">
    <property type="term" value="C:host cell Golgi apparatus"/>
    <property type="evidence" value="ECO:0007669"/>
    <property type="project" value="UniProtKB-SubCell"/>
</dbReference>
<dbReference type="GO" id="GO:1990904">
    <property type="term" value="C:ribonucleoprotein complex"/>
    <property type="evidence" value="ECO:0007669"/>
    <property type="project" value="UniProtKB-KW"/>
</dbReference>
<dbReference type="GO" id="GO:0019013">
    <property type="term" value="C:viral nucleocapsid"/>
    <property type="evidence" value="ECO:0007669"/>
    <property type="project" value="UniProtKB-UniRule"/>
</dbReference>
<dbReference type="GO" id="GO:0003723">
    <property type="term" value="F:RNA binding"/>
    <property type="evidence" value="ECO:0007669"/>
    <property type="project" value="UniProtKB-UniRule"/>
</dbReference>
<dbReference type="CDD" id="cd21595">
    <property type="entry name" value="CoV_N-CTD"/>
    <property type="match status" value="1"/>
</dbReference>
<dbReference type="CDD" id="cd21554">
    <property type="entry name" value="CoV_N-NTD"/>
    <property type="match status" value="1"/>
</dbReference>
<dbReference type="HAMAP" id="MF_04096">
    <property type="entry name" value="BETA_CORONA_NCAP"/>
    <property type="match status" value="1"/>
</dbReference>
<dbReference type="InterPro" id="IPR044344">
    <property type="entry name" value="N_prot_C_CoV"/>
</dbReference>
<dbReference type="InterPro" id="IPR044345">
    <property type="entry name" value="N_prot_N_CoV"/>
</dbReference>
<dbReference type="InterPro" id="IPR043505">
    <property type="entry name" value="NCAP_bCoV"/>
</dbReference>
<dbReference type="InterPro" id="IPR001218">
    <property type="entry name" value="Nucleocap_CoV"/>
</dbReference>
<dbReference type="InterPro" id="IPR037179">
    <property type="entry name" value="Nucleocapsid_C"/>
</dbReference>
<dbReference type="InterPro" id="IPR037195">
    <property type="entry name" value="Nucleocapsid_N"/>
</dbReference>
<dbReference type="Pfam" id="PF00937">
    <property type="entry name" value="CoV_nucleocap"/>
    <property type="match status" value="1"/>
</dbReference>
<dbReference type="PIRSF" id="PIRSF003888">
    <property type="entry name" value="Corona_nucleocap"/>
    <property type="match status" value="1"/>
</dbReference>
<dbReference type="SUPFAM" id="SSF110304">
    <property type="entry name" value="Coronavirus RNA-binding domain"/>
    <property type="match status" value="1"/>
</dbReference>
<dbReference type="SUPFAM" id="SSF103068">
    <property type="entry name" value="Nucleocapsid protein dimerization domain"/>
    <property type="match status" value="1"/>
</dbReference>
<dbReference type="PROSITE" id="PS51929">
    <property type="entry name" value="COV_N_CTD"/>
    <property type="match status" value="1"/>
</dbReference>
<dbReference type="PROSITE" id="PS51928">
    <property type="entry name" value="COV_N_NTD"/>
    <property type="match status" value="1"/>
</dbReference>
<keyword id="KW-0013">ADP-ribosylation</keyword>
<keyword id="KW-1040">Host Golgi apparatus</keyword>
<keyword id="KW-0597">Phosphoprotein</keyword>
<keyword id="KW-0687">Ribonucleoprotein</keyword>
<keyword id="KW-0694">RNA-binding</keyword>
<keyword id="KW-0804">Transcription</keyword>
<keyword id="KW-0805">Transcription regulation</keyword>
<keyword id="KW-0543">Viral nucleoprotein</keyword>
<keyword id="KW-0946">Virion</keyword>